<keyword id="KW-0012">Acyltransferase</keyword>
<keyword id="KW-0067">ATP-binding</keyword>
<keyword id="KW-0963">Cytoplasm</keyword>
<keyword id="KW-0547">Nucleotide-binding</keyword>
<keyword id="KW-1185">Reference proteome</keyword>
<keyword id="KW-0694">RNA-binding</keyword>
<keyword id="KW-0808">Transferase</keyword>
<keyword id="KW-0819">tRNA processing</keyword>
<keyword id="KW-0820">tRNA-binding</keyword>
<feature type="chain" id="PRO_0000403131" description="tRNA(Met) cytidine acetyltransferase TmcA">
    <location>
        <begin position="1"/>
        <end position="855"/>
    </location>
</feature>
<feature type="domain" description="N-acetyltransferase" evidence="1">
    <location>
        <begin position="480"/>
        <end position="663"/>
    </location>
</feature>
<feature type="binding site" evidence="1">
    <location>
        <position position="260"/>
    </location>
    <ligand>
        <name>ATP</name>
        <dbReference type="ChEBI" id="CHEBI:30616"/>
    </ligand>
</feature>
<feature type="binding site" evidence="1">
    <location>
        <begin position="286"/>
        <end position="295"/>
    </location>
    <ligand>
        <name>ATP</name>
        <dbReference type="ChEBI" id="CHEBI:30616"/>
    </ligand>
</feature>
<feature type="binding site" evidence="1">
    <location>
        <position position="438"/>
    </location>
    <ligand>
        <name>ATP</name>
        <dbReference type="ChEBI" id="CHEBI:30616"/>
    </ligand>
</feature>
<feature type="binding site" evidence="1">
    <location>
        <begin position="590"/>
        <end position="592"/>
    </location>
    <ligand>
        <name>acetyl-CoA</name>
        <dbReference type="ChEBI" id="CHEBI:57288"/>
    </ligand>
</feature>
<feature type="binding site" evidence="1">
    <location>
        <begin position="597"/>
        <end position="603"/>
    </location>
    <ligand>
        <name>acetyl-CoA</name>
        <dbReference type="ChEBI" id="CHEBI:57288"/>
    </ligand>
</feature>
<feature type="binding site" evidence="1">
    <location>
        <position position="630"/>
    </location>
    <ligand>
        <name>acetyl-CoA</name>
        <dbReference type="ChEBI" id="CHEBI:57288"/>
    </ligand>
</feature>
<feature type="binding site" evidence="1">
    <location>
        <position position="637"/>
    </location>
    <ligand>
        <name>acetyl-CoA</name>
        <dbReference type="ChEBI" id="CHEBI:57288"/>
    </ligand>
</feature>
<name>TMCA_METKA</name>
<comment type="function">
    <text evidence="1">Catalyzes the formation of N(4)-acetylcytidine (ac(4)C) at the wobble position of tRNA(Met), by using acetyl-CoA as an acetyl donor and ATP (or GTP).</text>
</comment>
<comment type="catalytic activity">
    <reaction evidence="1">
        <text>cytidine(34) in elongator tRNA(Met) + acetyl-CoA + ATP + H2O = N(4)-acetylcytidine(34) in elongator tRNA(Met) + ADP + phosphate + CoA + H(+)</text>
        <dbReference type="Rhea" id="RHEA:43788"/>
        <dbReference type="Rhea" id="RHEA-COMP:10693"/>
        <dbReference type="Rhea" id="RHEA-COMP:10694"/>
        <dbReference type="ChEBI" id="CHEBI:15377"/>
        <dbReference type="ChEBI" id="CHEBI:15378"/>
        <dbReference type="ChEBI" id="CHEBI:30616"/>
        <dbReference type="ChEBI" id="CHEBI:43474"/>
        <dbReference type="ChEBI" id="CHEBI:57287"/>
        <dbReference type="ChEBI" id="CHEBI:57288"/>
        <dbReference type="ChEBI" id="CHEBI:74900"/>
        <dbReference type="ChEBI" id="CHEBI:82748"/>
        <dbReference type="ChEBI" id="CHEBI:456216"/>
        <dbReference type="EC" id="2.3.1.193"/>
    </reaction>
</comment>
<comment type="subcellular location">
    <subcellularLocation>
        <location evidence="1">Cytoplasm</location>
    </subcellularLocation>
</comment>
<comment type="similarity">
    <text evidence="1">Belongs to the RNA cytidine acetyltransferase family. TmcA subfamily.</text>
</comment>
<organism>
    <name type="scientific">Methanopyrus kandleri (strain AV19 / DSM 6324 / JCM 9639 / NBRC 100938)</name>
    <dbReference type="NCBI Taxonomy" id="190192"/>
    <lineage>
        <taxon>Archaea</taxon>
        <taxon>Methanobacteriati</taxon>
        <taxon>Methanobacteriota</taxon>
        <taxon>Methanomada group</taxon>
        <taxon>Methanopyri</taxon>
        <taxon>Methanopyrales</taxon>
        <taxon>Methanopyraceae</taxon>
        <taxon>Methanopyrus</taxon>
    </lineage>
</organism>
<proteinExistence type="inferred from homology"/>
<evidence type="ECO:0000255" key="1">
    <source>
        <dbReference type="HAMAP-Rule" id="MF_01886"/>
    </source>
</evidence>
<protein>
    <recommendedName>
        <fullName evidence="1">tRNA(Met) cytidine acetyltransferase TmcA</fullName>
        <ecNumber evidence="1">2.3.1.193</ecNumber>
    </recommendedName>
</protein>
<sequence>MPDKAEVFFDEGVLDFADVDEIVLDVGEEALAEALAHRHRRMIVFQGDEGKAEAAGVVTAGAADVLFDVRDRPISVLYVTDSLKEDTYARERYEEFRRVLEGFAEEANFEYELEALTFSGSKRALGTTWDLMVIDLSYDLDPDAIGRLVETVRGGGLVIFQTPPFDRWRNMWTAFHKSLVTPPYTLDHVGKRFNRRFIRKLKEHDGVWIVDTDEWTAEPEPSEDVDLEVEVKRRERPDLDPPDDAVLPEELYRMCATEDQFRALIRFEELLESNGKTALILTADRGRGKSALLGIAVAGAGVTTDVYDVVVTASEPENVAVLFEFLLEALRELGVEYDVERDDKGNIVYVETDDFVVEYERPSEASEIECDLMVVDEAASIHVPILERILDNNDKVVYSSTIHGYEGAGRGFSVRFLQNVRKRRDVRLIEFKMHEPIRYDSDDPIERWLFDTLLLDAEPADLDKEDLECVKEMRVEFEKPDLRYWFEDPEGEEELRQFIGIYVMAHYRNRPSDVMVLADAPHHEAYALKTETGKIVTALQVAREGTIPRDVITKMRRGYRPPGNVIPDLMVQHHDALDFPRMKGLRIVRIATHPDIMRHGLGSRALKELAKIAKKKDYDWIGTGFGANEELTRFWLRNGFVPVHISPNRNPVSGEYSVAVIRPISEEAEEIINRANFEFRIKLADWLGETHRDLEPEVARLLFEPMSSLRYRPTLTEGQLRRLKKYADMVHTYEIAADAVRELAKAYFLDTEDRPELSEEEELLLITKCLQRWKWADVADVLGEEVPDLMRSLRDLVGLLYEEYKEDLQRSAAVEGIRKAVERLADKGLTGTVIVEVEEGEPKEVIIRREERLEL</sequence>
<gene>
    <name evidence="1" type="primary">tmcA</name>
    <name type="ordered locus">MK0146</name>
</gene>
<reference key="1">
    <citation type="journal article" date="2002" name="Proc. Natl. Acad. Sci. U.S.A.">
        <title>The complete genome of hyperthermophile Methanopyrus kandleri AV19 and monophyly of archaeal methanogens.</title>
        <authorList>
            <person name="Slesarev A.I."/>
            <person name="Mezhevaya K.V."/>
            <person name="Makarova K.S."/>
            <person name="Polushin N.N."/>
            <person name="Shcherbinina O.V."/>
            <person name="Shakhova V.V."/>
            <person name="Belova G.I."/>
            <person name="Aravind L."/>
            <person name="Natale D.A."/>
            <person name="Rogozin I.B."/>
            <person name="Tatusov R.L."/>
            <person name="Wolf Y.I."/>
            <person name="Stetter K.O."/>
            <person name="Malykh A.G."/>
            <person name="Koonin E.V."/>
            <person name="Kozyavkin S.A."/>
        </authorList>
    </citation>
    <scope>NUCLEOTIDE SEQUENCE [LARGE SCALE GENOMIC DNA]</scope>
    <source>
        <strain>AV19 / DSM 6324 / JCM 9639 / NBRC 100938</strain>
    </source>
</reference>
<dbReference type="EC" id="2.3.1.193" evidence="1"/>
<dbReference type="EMBL" id="AE009439">
    <property type="protein sequence ID" value="AAM01363.1"/>
    <property type="molecule type" value="Genomic_DNA"/>
</dbReference>
<dbReference type="RefSeq" id="WP_011018518.1">
    <property type="nucleotide sequence ID" value="NC_003551.1"/>
</dbReference>
<dbReference type="SMR" id="Q8TYZ5"/>
<dbReference type="STRING" id="190192.MK0146"/>
<dbReference type="PaxDb" id="190192-MK0146"/>
<dbReference type="EnsemblBacteria" id="AAM01363">
    <property type="protein sequence ID" value="AAM01363"/>
    <property type="gene ID" value="MK0146"/>
</dbReference>
<dbReference type="GeneID" id="1477449"/>
<dbReference type="KEGG" id="mka:MK0146"/>
<dbReference type="PATRIC" id="fig|190192.8.peg.146"/>
<dbReference type="HOGENOM" id="CLU_004652_1_0_2"/>
<dbReference type="InParanoid" id="Q8TYZ5"/>
<dbReference type="OrthoDB" id="312894at2157"/>
<dbReference type="Proteomes" id="UP000001826">
    <property type="component" value="Chromosome"/>
</dbReference>
<dbReference type="GO" id="GO:0005737">
    <property type="term" value="C:cytoplasm"/>
    <property type="evidence" value="ECO:0007669"/>
    <property type="project" value="UniProtKB-SubCell"/>
</dbReference>
<dbReference type="GO" id="GO:1990883">
    <property type="term" value="F:18S rRNA cytidine N-acetyltransferase activity"/>
    <property type="evidence" value="ECO:0007669"/>
    <property type="project" value="TreeGrafter"/>
</dbReference>
<dbReference type="GO" id="GO:0005524">
    <property type="term" value="F:ATP binding"/>
    <property type="evidence" value="ECO:0007669"/>
    <property type="project" value="UniProtKB-UniRule"/>
</dbReference>
<dbReference type="GO" id="GO:0000049">
    <property type="term" value="F:tRNA binding"/>
    <property type="evidence" value="ECO:0007669"/>
    <property type="project" value="UniProtKB-UniRule"/>
</dbReference>
<dbReference type="GO" id="GO:0051392">
    <property type="term" value="F:tRNA N4-acetyltransferase activity"/>
    <property type="evidence" value="ECO:0007669"/>
    <property type="project" value="UniProtKB-UniRule"/>
</dbReference>
<dbReference type="GO" id="GO:1904812">
    <property type="term" value="P:rRNA acetylation involved in maturation of SSU-rRNA"/>
    <property type="evidence" value="ECO:0007669"/>
    <property type="project" value="TreeGrafter"/>
</dbReference>
<dbReference type="GO" id="GO:0051391">
    <property type="term" value="P:tRNA acetylation"/>
    <property type="evidence" value="ECO:0007669"/>
    <property type="project" value="UniProtKB-UniRule"/>
</dbReference>
<dbReference type="GO" id="GO:0002101">
    <property type="term" value="P:tRNA wobble cytosine modification"/>
    <property type="evidence" value="ECO:0007669"/>
    <property type="project" value="UniProtKB-UniRule"/>
</dbReference>
<dbReference type="CDD" id="cd04301">
    <property type="entry name" value="NAT_SF"/>
    <property type="match status" value="1"/>
</dbReference>
<dbReference type="FunFam" id="3.40.50.300:FF:002218">
    <property type="entry name" value="tRNA(Met) cytidine acetyltransferase TmcA"/>
    <property type="match status" value="1"/>
</dbReference>
<dbReference type="Gene3D" id="3.40.50.11040">
    <property type="match status" value="1"/>
</dbReference>
<dbReference type="Gene3D" id="3.40.630.30">
    <property type="match status" value="1"/>
</dbReference>
<dbReference type="Gene3D" id="3.40.50.300">
    <property type="entry name" value="P-loop containing nucleotide triphosphate hydrolases"/>
    <property type="match status" value="1"/>
</dbReference>
<dbReference type="HAMAP" id="MF_01886">
    <property type="entry name" value="tRNA_acetyltr_TmcA"/>
    <property type="match status" value="1"/>
</dbReference>
<dbReference type="InterPro" id="IPR016181">
    <property type="entry name" value="Acyl_CoA_acyltransferase"/>
</dbReference>
<dbReference type="InterPro" id="IPR000182">
    <property type="entry name" value="GNAT_dom"/>
</dbReference>
<dbReference type="InterPro" id="IPR007807">
    <property type="entry name" value="NAT10/TcmA_helicase"/>
</dbReference>
<dbReference type="InterPro" id="IPR027417">
    <property type="entry name" value="P-loop_NTPase"/>
</dbReference>
<dbReference type="InterPro" id="IPR032672">
    <property type="entry name" value="TmcA/NAT10/Kre33"/>
</dbReference>
<dbReference type="InterPro" id="IPR013562">
    <property type="entry name" value="TmcA_N"/>
</dbReference>
<dbReference type="InterPro" id="IPR024914">
    <property type="entry name" value="tRNA_acetyltr_TmcA"/>
</dbReference>
<dbReference type="PANTHER" id="PTHR10925">
    <property type="entry name" value="N-ACETYLTRANSFERASE 10"/>
    <property type="match status" value="1"/>
</dbReference>
<dbReference type="PANTHER" id="PTHR10925:SF5">
    <property type="entry name" value="RNA CYTIDINE ACETYLTRANSFERASE"/>
    <property type="match status" value="1"/>
</dbReference>
<dbReference type="Pfam" id="PF13718">
    <property type="entry name" value="GNAT_acetyltr_2"/>
    <property type="match status" value="2"/>
</dbReference>
<dbReference type="Pfam" id="PF05127">
    <property type="entry name" value="NAT10_TcmA_helicase"/>
    <property type="match status" value="1"/>
</dbReference>
<dbReference type="Pfam" id="PF08351">
    <property type="entry name" value="TmcA_N"/>
    <property type="match status" value="1"/>
</dbReference>
<dbReference type="SUPFAM" id="SSF55729">
    <property type="entry name" value="Acyl-CoA N-acyltransferases (Nat)"/>
    <property type="match status" value="1"/>
</dbReference>
<dbReference type="SUPFAM" id="SSF52540">
    <property type="entry name" value="P-loop containing nucleoside triphosphate hydrolases"/>
    <property type="match status" value="1"/>
</dbReference>
<accession>Q8TYZ5</accession>